<sequence length="453" mass="50713">MSKISEVVQRARAAFNSGKTRPLQFRIQQLEALRRMIKEHEKDLAGALTADLHKNEWNAYYEEVVYVLEEIEYMIKKLPEWAADEPVEKTPQTQQDECYIHSEPLGVVLIIGTWNYPFTVTIQPMVGAIAAGNAVVIKPSELSENMANLLATIIPQYLDRDLYPVISGGIPETTELLKERFDHILYTGNTAVGKVIMMAAAKHLTPVTLELGGKNPCYVDKDCDLDIACRRIAWGKFMNSGQTCVAPDYILCDPSIQNQIVEKLKKALKEFYGEDAKKSRDYGRIINSRHFQRVMGLMEGQKVAYGGTGDAATRYIAPTILIDVDTQSQVMQEEIFGPVMPIVCVRSLEEAIQFINQREKPLALYVFSLNDKMIKKMIAETSSGGVTANDVIVHVSVHSLPYGGVGNSGMGSYHGKKSFETFSHCRSCLVRPLLNDESLKTRYPPSLAKMTRH</sequence>
<keyword id="KW-0007">Acetylation</keyword>
<keyword id="KW-0963">Cytoplasm</keyword>
<keyword id="KW-0443">Lipid metabolism</keyword>
<keyword id="KW-0520">NAD</keyword>
<keyword id="KW-0521">NADP</keyword>
<keyword id="KW-0560">Oxidoreductase</keyword>
<keyword id="KW-1185">Reference proteome</keyword>
<comment type="function">
    <text evidence="2 3 4">ALDHs play a major role in the detoxification of alcohol-derived acetaldehyde (Probable). They are involved in the metabolism of corticosteroids, biogenic amines, neurotransmitters, and lipid peroxidation (Probable). Oxidizes medium and long chain aldehydes into non-toxic fatty acids (By similarity). Preferentially oxidizes aromatic aldehyde substrates (By similarity). Comprises about 50 percent of corneal epithelial soluble proteins (By similarity). May play a role in preventing corneal damage caused by ultraviolet light (By similarity).</text>
</comment>
<comment type="catalytic activity">
    <reaction evidence="3">
        <text>an aldehyde + NAD(+) + H2O = a carboxylate + NADH + 2 H(+)</text>
        <dbReference type="Rhea" id="RHEA:16185"/>
        <dbReference type="ChEBI" id="CHEBI:15377"/>
        <dbReference type="ChEBI" id="CHEBI:15378"/>
        <dbReference type="ChEBI" id="CHEBI:17478"/>
        <dbReference type="ChEBI" id="CHEBI:29067"/>
        <dbReference type="ChEBI" id="CHEBI:57540"/>
        <dbReference type="ChEBI" id="CHEBI:57945"/>
        <dbReference type="EC" id="1.2.1.5"/>
    </reaction>
</comment>
<comment type="catalytic activity">
    <reaction evidence="3">
        <text>octanal + NAD(+) + H2O = octanoate + NADH + 2 H(+)</text>
        <dbReference type="Rhea" id="RHEA:44100"/>
        <dbReference type="ChEBI" id="CHEBI:15377"/>
        <dbReference type="ChEBI" id="CHEBI:15378"/>
        <dbReference type="ChEBI" id="CHEBI:17935"/>
        <dbReference type="ChEBI" id="CHEBI:25646"/>
        <dbReference type="ChEBI" id="CHEBI:57540"/>
        <dbReference type="ChEBI" id="CHEBI:57945"/>
    </reaction>
</comment>
<comment type="subunit">
    <text evidence="2">Homodimer.</text>
</comment>
<comment type="subcellular location">
    <subcellularLocation>
        <location evidence="3">Cytoplasm</location>
    </subcellularLocation>
</comment>
<comment type="similarity">
    <text evidence="4">Belongs to the aldehyde dehydrogenase family.</text>
</comment>
<organism>
    <name type="scientific">Canis lupus familiaris</name>
    <name type="common">Dog</name>
    <name type="synonym">Canis familiaris</name>
    <dbReference type="NCBI Taxonomy" id="9615"/>
    <lineage>
        <taxon>Eukaryota</taxon>
        <taxon>Metazoa</taxon>
        <taxon>Chordata</taxon>
        <taxon>Craniata</taxon>
        <taxon>Vertebrata</taxon>
        <taxon>Euteleostomi</taxon>
        <taxon>Mammalia</taxon>
        <taxon>Eutheria</taxon>
        <taxon>Laurasiatheria</taxon>
        <taxon>Carnivora</taxon>
        <taxon>Caniformia</taxon>
        <taxon>Canidae</taxon>
        <taxon>Canis</taxon>
    </lineage>
</organism>
<accession>A3RF36</accession>
<evidence type="ECO:0000250" key="1"/>
<evidence type="ECO:0000250" key="2">
    <source>
        <dbReference type="UniProtKB" id="P30838"/>
    </source>
</evidence>
<evidence type="ECO:0000250" key="3">
    <source>
        <dbReference type="UniProtKB" id="P47739"/>
    </source>
</evidence>
<evidence type="ECO:0000305" key="4"/>
<name>AL3A1_CANLF</name>
<gene>
    <name type="primary">ALDH3A1</name>
    <name type="synonym">ALDH3</name>
</gene>
<dbReference type="EC" id="1.2.1.5" evidence="3"/>
<dbReference type="EMBL" id="EF382362">
    <property type="protein sequence ID" value="ABN70935.1"/>
    <property type="molecule type" value="mRNA"/>
</dbReference>
<dbReference type="RefSeq" id="NP_001075889.1">
    <property type="nucleotide sequence ID" value="NM_001082420.1"/>
</dbReference>
<dbReference type="SMR" id="A3RF36"/>
<dbReference type="FunCoup" id="A3RF36">
    <property type="interactions" value="318"/>
</dbReference>
<dbReference type="STRING" id="9615.ENSCAFP00000054381"/>
<dbReference type="PaxDb" id="9612-ENSCAFP00000026805"/>
<dbReference type="Ensembl" id="ENSCAFT00000028823.5">
    <property type="protein sequence ID" value="ENSCAFP00000026805.5"/>
    <property type="gene ID" value="ENSCAFG00000018146.5"/>
</dbReference>
<dbReference type="Ensembl" id="ENSCAFT00845029400.1">
    <property type="protein sequence ID" value="ENSCAFP00845023106.1"/>
    <property type="gene ID" value="ENSCAFG00845016394.1"/>
</dbReference>
<dbReference type="GeneID" id="489526"/>
<dbReference type="KEGG" id="cfa:489526"/>
<dbReference type="CTD" id="218"/>
<dbReference type="VEuPathDB" id="HostDB:ENSCAFG00845016394"/>
<dbReference type="VGNC" id="VGNC:37786">
    <property type="gene designation" value="ALDH3A1"/>
</dbReference>
<dbReference type="eggNOG" id="KOG2456">
    <property type="taxonomic scope" value="Eukaryota"/>
</dbReference>
<dbReference type="GeneTree" id="ENSGT00940000162101"/>
<dbReference type="InParanoid" id="A3RF36"/>
<dbReference type="OrthoDB" id="440325at2759"/>
<dbReference type="Reactome" id="R-CFA-211945">
    <property type="pathway name" value="Phase I - Functionalization of compounds"/>
</dbReference>
<dbReference type="Proteomes" id="UP000002254">
    <property type="component" value="Chromosome 5"/>
</dbReference>
<dbReference type="Proteomes" id="UP000694429">
    <property type="component" value="Unplaced"/>
</dbReference>
<dbReference type="Proteomes" id="UP000694542">
    <property type="component" value="Unplaced"/>
</dbReference>
<dbReference type="Proteomes" id="UP000805418">
    <property type="component" value="Chromosome 5"/>
</dbReference>
<dbReference type="GO" id="GO:0005737">
    <property type="term" value="C:cytoplasm"/>
    <property type="evidence" value="ECO:0007669"/>
    <property type="project" value="UniProtKB-SubCell"/>
</dbReference>
<dbReference type="GO" id="GO:0004029">
    <property type="term" value="F:aldehyde dehydrogenase (NAD+) activity"/>
    <property type="evidence" value="ECO:0007669"/>
    <property type="project" value="RHEA"/>
</dbReference>
<dbReference type="GO" id="GO:0006081">
    <property type="term" value="P:aldehyde metabolic process"/>
    <property type="evidence" value="ECO:0007669"/>
    <property type="project" value="InterPro"/>
</dbReference>
<dbReference type="GO" id="GO:0006629">
    <property type="term" value="P:lipid metabolic process"/>
    <property type="evidence" value="ECO:0007669"/>
    <property type="project" value="UniProtKB-KW"/>
</dbReference>
<dbReference type="CDD" id="cd07132">
    <property type="entry name" value="ALDH_F3AB"/>
    <property type="match status" value="1"/>
</dbReference>
<dbReference type="FunFam" id="3.40.309.10:FF:000003">
    <property type="entry name" value="Aldehyde dehydrogenase"/>
    <property type="match status" value="1"/>
</dbReference>
<dbReference type="FunFam" id="3.40.605.10:FF:000004">
    <property type="entry name" value="Aldehyde dehydrogenase"/>
    <property type="match status" value="1"/>
</dbReference>
<dbReference type="Gene3D" id="3.40.605.10">
    <property type="entry name" value="Aldehyde Dehydrogenase, Chain A, domain 1"/>
    <property type="match status" value="1"/>
</dbReference>
<dbReference type="Gene3D" id="3.40.309.10">
    <property type="entry name" value="Aldehyde Dehydrogenase, Chain A, domain 2"/>
    <property type="match status" value="1"/>
</dbReference>
<dbReference type="InterPro" id="IPR016161">
    <property type="entry name" value="Ald_DH/histidinol_DH"/>
</dbReference>
<dbReference type="InterPro" id="IPR016163">
    <property type="entry name" value="Ald_DH_C"/>
</dbReference>
<dbReference type="InterPro" id="IPR016160">
    <property type="entry name" value="Ald_DH_CS_CYS"/>
</dbReference>
<dbReference type="InterPro" id="IPR029510">
    <property type="entry name" value="Ald_DH_CS_GLU"/>
</dbReference>
<dbReference type="InterPro" id="IPR016162">
    <property type="entry name" value="Ald_DH_N"/>
</dbReference>
<dbReference type="InterPro" id="IPR015590">
    <property type="entry name" value="Aldehyde_DH_dom"/>
</dbReference>
<dbReference type="InterPro" id="IPR012394">
    <property type="entry name" value="Aldehyde_DH_NAD(P)"/>
</dbReference>
<dbReference type="PANTHER" id="PTHR43570">
    <property type="entry name" value="ALDEHYDE DEHYDROGENASE"/>
    <property type="match status" value="1"/>
</dbReference>
<dbReference type="PANTHER" id="PTHR43570:SF15">
    <property type="entry name" value="ALDEHYDE DEHYDROGENASE, DIMERIC NADP-PREFERRING"/>
    <property type="match status" value="1"/>
</dbReference>
<dbReference type="Pfam" id="PF00171">
    <property type="entry name" value="Aldedh"/>
    <property type="match status" value="1"/>
</dbReference>
<dbReference type="PIRSF" id="PIRSF036492">
    <property type="entry name" value="ALDH"/>
    <property type="match status" value="1"/>
</dbReference>
<dbReference type="SUPFAM" id="SSF53720">
    <property type="entry name" value="ALDH-like"/>
    <property type="match status" value="1"/>
</dbReference>
<dbReference type="PROSITE" id="PS00070">
    <property type="entry name" value="ALDEHYDE_DEHYDR_CYS"/>
    <property type="match status" value="1"/>
</dbReference>
<dbReference type="PROSITE" id="PS00687">
    <property type="entry name" value="ALDEHYDE_DEHYDR_GLU"/>
    <property type="match status" value="1"/>
</dbReference>
<feature type="initiator methionine" description="Removed" evidence="2">
    <location>
        <position position="1"/>
    </location>
</feature>
<feature type="chain" id="PRO_0000289586" description="Aldehyde dehydrogenase, dimeric NADP-preferring">
    <location>
        <begin position="2"/>
        <end position="453"/>
    </location>
</feature>
<feature type="active site" evidence="1">
    <location>
        <position position="210"/>
    </location>
</feature>
<feature type="active site" evidence="1">
    <location>
        <position position="244"/>
    </location>
</feature>
<feature type="binding site" evidence="1">
    <location>
        <begin position="188"/>
        <end position="193"/>
    </location>
    <ligand>
        <name>NAD(+)</name>
        <dbReference type="ChEBI" id="CHEBI:57540"/>
    </ligand>
</feature>
<feature type="modified residue" description="N-acetylserine" evidence="2">
    <location>
        <position position="2"/>
    </location>
</feature>
<feature type="modified residue" description="N6-acetyllysine" evidence="2">
    <location>
        <position position="178"/>
    </location>
</feature>
<feature type="modified residue" description="N6-acetyllysine" evidence="2">
    <location>
        <position position="194"/>
    </location>
</feature>
<protein>
    <recommendedName>
        <fullName>Aldehyde dehydrogenase, dimeric NADP-preferring</fullName>
        <ecNumber evidence="3">1.2.1.5</ecNumber>
    </recommendedName>
    <alternativeName>
        <fullName>ALDHIII</fullName>
    </alternativeName>
    <alternativeName>
        <fullName>Aldehyde dehydrogenase 3</fullName>
    </alternativeName>
    <alternativeName>
        <fullName>Aldehyde dehydrogenase family 3 member A1</fullName>
    </alternativeName>
</protein>
<reference key="1">
    <citation type="submission" date="2007-01" db="EMBL/GenBank/DDBJ databases">
        <authorList>
            <person name="Wistow G."/>
        </authorList>
    </citation>
    <scope>NUCLEOTIDE SEQUENCE [MRNA]</scope>
    <source>
        <tissue>Cornea</tissue>
    </source>
</reference>
<proteinExistence type="evidence at transcript level"/>